<feature type="chain" id="PRO_1000126106" description="Glycogen synthase">
    <location>
        <begin position="1"/>
        <end position="477"/>
    </location>
</feature>
<feature type="binding site" evidence="1">
    <location>
        <position position="15"/>
    </location>
    <ligand>
        <name>ADP-alpha-D-glucose</name>
        <dbReference type="ChEBI" id="CHEBI:57498"/>
    </ligand>
</feature>
<organism>
    <name type="scientific">Streptococcus pneumoniae (strain CGSP14)</name>
    <dbReference type="NCBI Taxonomy" id="516950"/>
    <lineage>
        <taxon>Bacteria</taxon>
        <taxon>Bacillati</taxon>
        <taxon>Bacillota</taxon>
        <taxon>Bacilli</taxon>
        <taxon>Lactobacillales</taxon>
        <taxon>Streptococcaceae</taxon>
        <taxon>Streptococcus</taxon>
    </lineage>
</organism>
<keyword id="KW-0320">Glycogen biosynthesis</keyword>
<keyword id="KW-0328">Glycosyltransferase</keyword>
<keyword id="KW-0808">Transferase</keyword>
<dbReference type="EC" id="2.4.1.21" evidence="1"/>
<dbReference type="EMBL" id="CP001033">
    <property type="protein sequence ID" value="ACB90408.1"/>
    <property type="molecule type" value="Genomic_DNA"/>
</dbReference>
<dbReference type="RefSeq" id="WP_000697295.1">
    <property type="nucleotide sequence ID" value="NC_010582.1"/>
</dbReference>
<dbReference type="SMR" id="B2IPY4"/>
<dbReference type="CAZy" id="GT5">
    <property type="family name" value="Glycosyltransferase Family 5"/>
</dbReference>
<dbReference type="KEGG" id="spw:SPCG_1156"/>
<dbReference type="HOGENOM" id="CLU_009583_18_2_9"/>
<dbReference type="UniPathway" id="UPA00164"/>
<dbReference type="GO" id="GO:0009011">
    <property type="term" value="F:alpha-1,4-glucan glucosyltransferase (ADP-glucose donor) activity"/>
    <property type="evidence" value="ECO:0007669"/>
    <property type="project" value="UniProtKB-UniRule"/>
</dbReference>
<dbReference type="GO" id="GO:0004373">
    <property type="term" value="F:alpha-1,4-glucan glucosyltransferase (UDP-glucose donor) activity"/>
    <property type="evidence" value="ECO:0007669"/>
    <property type="project" value="InterPro"/>
</dbReference>
<dbReference type="GO" id="GO:0005978">
    <property type="term" value="P:glycogen biosynthetic process"/>
    <property type="evidence" value="ECO:0007669"/>
    <property type="project" value="UniProtKB-UniRule"/>
</dbReference>
<dbReference type="CDD" id="cd03791">
    <property type="entry name" value="GT5_Glycogen_synthase_DULL1-like"/>
    <property type="match status" value="1"/>
</dbReference>
<dbReference type="Gene3D" id="3.40.50.2000">
    <property type="entry name" value="Glycogen Phosphorylase B"/>
    <property type="match status" value="2"/>
</dbReference>
<dbReference type="HAMAP" id="MF_00484">
    <property type="entry name" value="Glycogen_synth"/>
    <property type="match status" value="1"/>
</dbReference>
<dbReference type="InterPro" id="IPR001296">
    <property type="entry name" value="Glyco_trans_1"/>
</dbReference>
<dbReference type="InterPro" id="IPR011835">
    <property type="entry name" value="GS/SS"/>
</dbReference>
<dbReference type="InterPro" id="IPR013534">
    <property type="entry name" value="Starch_synth_cat_dom"/>
</dbReference>
<dbReference type="NCBIfam" id="TIGR02095">
    <property type="entry name" value="glgA"/>
    <property type="match status" value="1"/>
</dbReference>
<dbReference type="NCBIfam" id="NF001898">
    <property type="entry name" value="PRK00654.1-1"/>
    <property type="match status" value="1"/>
</dbReference>
<dbReference type="PANTHER" id="PTHR45825:SF11">
    <property type="entry name" value="ALPHA AMYLASE DOMAIN-CONTAINING PROTEIN"/>
    <property type="match status" value="1"/>
</dbReference>
<dbReference type="PANTHER" id="PTHR45825">
    <property type="entry name" value="GRANULE-BOUND STARCH SYNTHASE 1, CHLOROPLASTIC/AMYLOPLASTIC"/>
    <property type="match status" value="1"/>
</dbReference>
<dbReference type="Pfam" id="PF08323">
    <property type="entry name" value="Glyco_transf_5"/>
    <property type="match status" value="1"/>
</dbReference>
<dbReference type="Pfam" id="PF00534">
    <property type="entry name" value="Glycos_transf_1"/>
    <property type="match status" value="1"/>
</dbReference>
<dbReference type="SUPFAM" id="SSF53756">
    <property type="entry name" value="UDP-Glycosyltransferase/glycogen phosphorylase"/>
    <property type="match status" value="1"/>
</dbReference>
<reference key="1">
    <citation type="journal article" date="2009" name="BMC Genomics">
        <title>Genome evolution driven by host adaptations results in a more virulent and antimicrobial-resistant Streptococcus pneumoniae serotype 14.</title>
        <authorList>
            <person name="Ding F."/>
            <person name="Tang P."/>
            <person name="Hsu M.-H."/>
            <person name="Cui P."/>
            <person name="Hu S."/>
            <person name="Yu J."/>
            <person name="Chiu C.-H."/>
        </authorList>
    </citation>
    <scope>NUCLEOTIDE SEQUENCE [LARGE SCALE GENOMIC DNA]</scope>
    <source>
        <strain>CGSP14</strain>
    </source>
</reference>
<proteinExistence type="inferred from homology"/>
<gene>
    <name evidence="1" type="primary">glgA</name>
    <name type="ordered locus">SPCG_1156</name>
</gene>
<name>GLGA_STRPS</name>
<sequence>MKILFVAAEGAPFSKTGGLGDVIGALPKSLVKAGHEVAVILPYYDMVEAKFGNQIEDVLHFEVSVGWRRQYCGIKKTVLNGVTFYFIDNQYYFFRGHVYGDFDDGERFAFFQLAAIEAMERIDFIPDLLHVHDYHTAMIPFLLKEKYRWIQAYEDIETVLTIHNLEFQGQFSEGMLGDLFGVGFERYADGTLRWNNCLNWMKAGILYANRVSTVSPSYAHEIMTSQFGCNLDQILKMESGKVSGIVNGIDADLYNPQTDALLDYHFNQEDLSGKAKNKAKLQERVGLPVRADVPLVGIVSRLTRQKGFDVVVESLHHILQEDVQIVLLGTGDPAFEGAFSWFAQIYPDKLSTNITFDVKLAQEIYAACDLFLMPSRFEPCGLSQMMAMRYGTLPLVHEVGGLRDTVRAFNPIEGSGTGFSFDNLSPYWLNWTFQTALDLYRNHPDIWRNLQKQAMESDFSWDTACKSYLDLYHSLVN</sequence>
<accession>B2IPY4</accession>
<comment type="function">
    <text evidence="1">Synthesizes alpha-1,4-glucan chains using ADP-glucose.</text>
</comment>
<comment type="catalytic activity">
    <reaction evidence="1">
        <text>[(1-&gt;4)-alpha-D-glucosyl](n) + ADP-alpha-D-glucose = [(1-&gt;4)-alpha-D-glucosyl](n+1) + ADP + H(+)</text>
        <dbReference type="Rhea" id="RHEA:18189"/>
        <dbReference type="Rhea" id="RHEA-COMP:9584"/>
        <dbReference type="Rhea" id="RHEA-COMP:9587"/>
        <dbReference type="ChEBI" id="CHEBI:15378"/>
        <dbReference type="ChEBI" id="CHEBI:15444"/>
        <dbReference type="ChEBI" id="CHEBI:57498"/>
        <dbReference type="ChEBI" id="CHEBI:456216"/>
        <dbReference type="EC" id="2.4.1.21"/>
    </reaction>
</comment>
<comment type="pathway">
    <text evidence="1">Glycan biosynthesis; glycogen biosynthesis.</text>
</comment>
<comment type="similarity">
    <text evidence="1">Belongs to the glycosyltransferase 1 family. Bacterial/plant glycogen synthase subfamily.</text>
</comment>
<evidence type="ECO:0000255" key="1">
    <source>
        <dbReference type="HAMAP-Rule" id="MF_00484"/>
    </source>
</evidence>
<protein>
    <recommendedName>
        <fullName evidence="1">Glycogen synthase</fullName>
        <ecNumber evidence="1">2.4.1.21</ecNumber>
    </recommendedName>
    <alternativeName>
        <fullName evidence="1">Starch [bacterial glycogen] synthase</fullName>
    </alternativeName>
</protein>